<protein>
    <recommendedName>
        <fullName>Vacuolar protein sorting-associated protein 27</fullName>
    </recommendedName>
</protein>
<keyword id="KW-0967">Endosome</keyword>
<keyword id="KW-0472">Membrane</keyword>
<keyword id="KW-0479">Metal-binding</keyword>
<keyword id="KW-1185">Reference proteome</keyword>
<keyword id="KW-0677">Repeat</keyword>
<keyword id="KW-0862">Zinc</keyword>
<keyword id="KW-0863">Zinc-finger</keyword>
<proteinExistence type="inferred from homology"/>
<dbReference type="EMBL" id="CM003149">
    <property type="protein sequence ID" value="KIS68281.1"/>
    <property type="molecule type" value="Genomic_DNA"/>
</dbReference>
<dbReference type="RefSeq" id="XP_011390290.1">
    <property type="nucleotide sequence ID" value="XM_011391988.1"/>
</dbReference>
<dbReference type="SMR" id="Q4P7Q1"/>
<dbReference type="FunCoup" id="Q4P7Q1">
    <property type="interactions" value="89"/>
</dbReference>
<dbReference type="STRING" id="237631.Q4P7Q1"/>
<dbReference type="EnsemblFungi" id="KIS68281">
    <property type="protein sequence ID" value="KIS68281"/>
    <property type="gene ID" value="UMAG_03862"/>
</dbReference>
<dbReference type="GeneID" id="23564205"/>
<dbReference type="KEGG" id="uma:UMAG_03862"/>
<dbReference type="VEuPathDB" id="FungiDB:UMAG_03862"/>
<dbReference type="eggNOG" id="KOG1818">
    <property type="taxonomic scope" value="Eukaryota"/>
</dbReference>
<dbReference type="HOGENOM" id="CLU_011862_0_0_1"/>
<dbReference type="InParanoid" id="Q4P7Q1"/>
<dbReference type="OMA" id="DQQCSAK"/>
<dbReference type="OrthoDB" id="957735at2759"/>
<dbReference type="Proteomes" id="UP000000561">
    <property type="component" value="Chromosome 10"/>
</dbReference>
<dbReference type="GO" id="GO:0005769">
    <property type="term" value="C:early endosome"/>
    <property type="evidence" value="ECO:0000318"/>
    <property type="project" value="GO_Central"/>
</dbReference>
<dbReference type="GO" id="GO:0010008">
    <property type="term" value="C:endosome membrane"/>
    <property type="evidence" value="ECO:0007669"/>
    <property type="project" value="UniProtKB-SubCell"/>
</dbReference>
<dbReference type="GO" id="GO:0035091">
    <property type="term" value="F:phosphatidylinositol binding"/>
    <property type="evidence" value="ECO:0007669"/>
    <property type="project" value="InterPro"/>
</dbReference>
<dbReference type="GO" id="GO:0043130">
    <property type="term" value="F:ubiquitin binding"/>
    <property type="evidence" value="ECO:0000318"/>
    <property type="project" value="GO_Central"/>
</dbReference>
<dbReference type="GO" id="GO:0008270">
    <property type="term" value="F:zinc ion binding"/>
    <property type="evidence" value="ECO:0007669"/>
    <property type="project" value="UniProtKB-KW"/>
</dbReference>
<dbReference type="GO" id="GO:0032456">
    <property type="term" value="P:endocytic recycling"/>
    <property type="evidence" value="ECO:0000318"/>
    <property type="project" value="GO_Central"/>
</dbReference>
<dbReference type="GO" id="GO:0006886">
    <property type="term" value="P:intracellular protein transport"/>
    <property type="evidence" value="ECO:0007669"/>
    <property type="project" value="UniProtKB-ARBA"/>
</dbReference>
<dbReference type="GO" id="GO:0031623">
    <property type="term" value="P:receptor internalization"/>
    <property type="evidence" value="ECO:0000318"/>
    <property type="project" value="GO_Central"/>
</dbReference>
<dbReference type="GO" id="GO:0007034">
    <property type="term" value="P:vacuolar transport"/>
    <property type="evidence" value="ECO:0007669"/>
    <property type="project" value="UniProtKB-ARBA"/>
</dbReference>
<dbReference type="CDD" id="cd15735">
    <property type="entry name" value="FYVE_spVPS27p_like"/>
    <property type="match status" value="1"/>
</dbReference>
<dbReference type="CDD" id="cd21385">
    <property type="entry name" value="GAT_Vps27"/>
    <property type="match status" value="1"/>
</dbReference>
<dbReference type="CDD" id="cd16979">
    <property type="entry name" value="VHS_Vps27"/>
    <property type="match status" value="1"/>
</dbReference>
<dbReference type="Gene3D" id="1.20.5.1940">
    <property type="match status" value="1"/>
</dbReference>
<dbReference type="Gene3D" id="1.25.40.90">
    <property type="match status" value="1"/>
</dbReference>
<dbReference type="Gene3D" id="6.10.140.100">
    <property type="match status" value="1"/>
</dbReference>
<dbReference type="Gene3D" id="3.30.40.10">
    <property type="entry name" value="Zinc/RING finger domain, C3HC4 (zinc finger)"/>
    <property type="match status" value="1"/>
</dbReference>
<dbReference type="InterPro" id="IPR008942">
    <property type="entry name" value="ENTH_VHS"/>
</dbReference>
<dbReference type="InterPro" id="IPR017073">
    <property type="entry name" value="HGS/VPS27"/>
</dbReference>
<dbReference type="InterPro" id="IPR003903">
    <property type="entry name" value="UIM_dom"/>
</dbReference>
<dbReference type="InterPro" id="IPR002014">
    <property type="entry name" value="VHS_dom"/>
</dbReference>
<dbReference type="InterPro" id="IPR000306">
    <property type="entry name" value="Znf_FYVE"/>
</dbReference>
<dbReference type="InterPro" id="IPR017455">
    <property type="entry name" value="Znf_FYVE-rel"/>
</dbReference>
<dbReference type="InterPro" id="IPR011011">
    <property type="entry name" value="Znf_FYVE_PHD"/>
</dbReference>
<dbReference type="InterPro" id="IPR013083">
    <property type="entry name" value="Znf_RING/FYVE/PHD"/>
</dbReference>
<dbReference type="PANTHER" id="PTHR46275">
    <property type="entry name" value="HEPATOCYTE GROWTH FACTOR-REGULATED TYROSINE KINASE SUBSTRATE"/>
    <property type="match status" value="1"/>
</dbReference>
<dbReference type="PANTHER" id="PTHR46275:SF1">
    <property type="entry name" value="HEPATOCYTE GROWTH FACTOR-REGULATED TYROSINE KINASE SUBSTRATE"/>
    <property type="match status" value="1"/>
</dbReference>
<dbReference type="Pfam" id="PF01363">
    <property type="entry name" value="FYVE"/>
    <property type="match status" value="1"/>
</dbReference>
<dbReference type="Pfam" id="PF02809">
    <property type="entry name" value="UIM"/>
    <property type="match status" value="2"/>
</dbReference>
<dbReference type="Pfam" id="PF00790">
    <property type="entry name" value="VHS"/>
    <property type="match status" value="1"/>
</dbReference>
<dbReference type="SMART" id="SM00064">
    <property type="entry name" value="FYVE"/>
    <property type="match status" value="1"/>
</dbReference>
<dbReference type="SMART" id="SM00726">
    <property type="entry name" value="UIM"/>
    <property type="match status" value="2"/>
</dbReference>
<dbReference type="SMART" id="SM00288">
    <property type="entry name" value="VHS"/>
    <property type="match status" value="1"/>
</dbReference>
<dbReference type="SUPFAM" id="SSF48464">
    <property type="entry name" value="ENTH/VHS domain"/>
    <property type="match status" value="1"/>
</dbReference>
<dbReference type="SUPFAM" id="SSF57903">
    <property type="entry name" value="FYVE/PHD zinc finger"/>
    <property type="match status" value="1"/>
</dbReference>
<dbReference type="PROSITE" id="PS50179">
    <property type="entry name" value="VHS"/>
    <property type="match status" value="1"/>
</dbReference>
<dbReference type="PROSITE" id="PS50178">
    <property type="entry name" value="ZF_FYVE"/>
    <property type="match status" value="1"/>
</dbReference>
<evidence type="ECO:0000250" key="1"/>
<evidence type="ECO:0000255" key="2">
    <source>
        <dbReference type="PROSITE-ProRule" id="PRU00091"/>
    </source>
</evidence>
<evidence type="ECO:0000255" key="3">
    <source>
        <dbReference type="PROSITE-ProRule" id="PRU00218"/>
    </source>
</evidence>
<evidence type="ECO:0000256" key="4">
    <source>
        <dbReference type="SAM" id="MobiDB-lite"/>
    </source>
</evidence>
<evidence type="ECO:0000305" key="5"/>
<comment type="function">
    <text evidence="1">Component of the ESCRT-0 complex which is the sorting receptor for ubiquitinated cargo proteins at the multivesicular body (MVB) and recruits ESCRT-I to the MVB outer membrane.</text>
</comment>
<comment type="subunit">
    <text>Component of the ESCRT-0 complex composed of HSE1 and VPS27.</text>
</comment>
<comment type="subcellular location">
    <subcellularLocation>
        <location evidence="1">Endosome membrane</location>
        <topology evidence="1">Peripheral membrane protein</topology>
        <orientation evidence="1">Cytoplasmic side</orientation>
    </subcellularLocation>
</comment>
<comment type="domain">
    <text>The FYVE domain is involved in the binding to phosphatidylinositol 3-phosphate (PtdIns(3)P) which is required for the association to endosomal membranes.</text>
</comment>
<comment type="domain">
    <text evidence="1">Both IUM domains are necessary for efficient binding to ubiquitin.</text>
</comment>
<comment type="similarity">
    <text evidence="5">Belongs to the VPS27 family.</text>
</comment>
<name>VPS27_MYCMD</name>
<reference key="1">
    <citation type="journal article" date="2006" name="Nature">
        <title>Insights from the genome of the biotrophic fungal plant pathogen Ustilago maydis.</title>
        <authorList>
            <person name="Kaemper J."/>
            <person name="Kahmann R."/>
            <person name="Boelker M."/>
            <person name="Ma L.-J."/>
            <person name="Brefort T."/>
            <person name="Saville B.J."/>
            <person name="Banuett F."/>
            <person name="Kronstad J.W."/>
            <person name="Gold S.E."/>
            <person name="Mueller O."/>
            <person name="Perlin M.H."/>
            <person name="Woesten H.A.B."/>
            <person name="de Vries R."/>
            <person name="Ruiz-Herrera J."/>
            <person name="Reynaga-Pena C.G."/>
            <person name="Snetselaar K."/>
            <person name="McCann M."/>
            <person name="Perez-Martin J."/>
            <person name="Feldbruegge M."/>
            <person name="Basse C.W."/>
            <person name="Steinberg G."/>
            <person name="Ibeas J.I."/>
            <person name="Holloman W."/>
            <person name="Guzman P."/>
            <person name="Farman M.L."/>
            <person name="Stajich J.E."/>
            <person name="Sentandreu R."/>
            <person name="Gonzalez-Prieto J.M."/>
            <person name="Kennell J.C."/>
            <person name="Molina L."/>
            <person name="Schirawski J."/>
            <person name="Mendoza-Mendoza A."/>
            <person name="Greilinger D."/>
            <person name="Muench K."/>
            <person name="Roessel N."/>
            <person name="Scherer M."/>
            <person name="Vranes M."/>
            <person name="Ladendorf O."/>
            <person name="Vincon V."/>
            <person name="Fuchs U."/>
            <person name="Sandrock B."/>
            <person name="Meng S."/>
            <person name="Ho E.C.H."/>
            <person name="Cahill M.J."/>
            <person name="Boyce K.J."/>
            <person name="Klose J."/>
            <person name="Klosterman S.J."/>
            <person name="Deelstra H.J."/>
            <person name="Ortiz-Castellanos L."/>
            <person name="Li W."/>
            <person name="Sanchez-Alonso P."/>
            <person name="Schreier P.H."/>
            <person name="Haeuser-Hahn I."/>
            <person name="Vaupel M."/>
            <person name="Koopmann E."/>
            <person name="Friedrich G."/>
            <person name="Voss H."/>
            <person name="Schlueter T."/>
            <person name="Margolis J."/>
            <person name="Platt D."/>
            <person name="Swimmer C."/>
            <person name="Gnirke A."/>
            <person name="Chen F."/>
            <person name="Vysotskaia V."/>
            <person name="Mannhaupt G."/>
            <person name="Gueldener U."/>
            <person name="Muensterkoetter M."/>
            <person name="Haase D."/>
            <person name="Oesterheld M."/>
            <person name="Mewes H.-W."/>
            <person name="Mauceli E.W."/>
            <person name="DeCaprio D."/>
            <person name="Wade C.M."/>
            <person name="Butler J."/>
            <person name="Young S.K."/>
            <person name="Jaffe D.B."/>
            <person name="Calvo S.E."/>
            <person name="Nusbaum C."/>
            <person name="Galagan J.E."/>
            <person name="Birren B.W."/>
        </authorList>
    </citation>
    <scope>NUCLEOTIDE SEQUENCE [LARGE SCALE GENOMIC DNA]</scope>
    <source>
        <strain>DSM 14603 / FGSC 9021 / UM521</strain>
    </source>
</reference>
<reference key="2">
    <citation type="submission" date="2014-09" db="EMBL/GenBank/DDBJ databases">
        <authorList>
            <person name="Gueldener U."/>
            <person name="Muensterkoetter M."/>
            <person name="Walter M.C."/>
            <person name="Mannhaupt G."/>
            <person name="Kahmann R."/>
        </authorList>
    </citation>
    <scope>GENOME REANNOTATION</scope>
    <source>
        <strain>DSM 14603 / FGSC 9021 / UM521</strain>
    </source>
</reference>
<sequence length="916" mass="98290">MSALWSAWGADAFTEQVEKATSEMLPVGSEDIALNLEICDQVRAKQVPAKQAMQVLKRRLSHKNPNVVLLALGLTDICIKNGGDHFLQQVASREFMDNLLSVLRNPAGVNNDVKNKALGLIQNWSQIAQAKPAHMSYITDIYQQLKSDDQFDFPPLDPNAAAVAAALVETLTAPEWVDGDVCMRCRTAFTTFNRKHHCRNCGNVFCQQCSSHNMALSWFGIGQDVRVCDGCYARKGPPKNALKLSRSKSASSSSPSTSSSKHVPSGRGASSSSSHHRSATLGAKSKRSARQKEEDDIALAIKLSLEASAETAPQRSRPTSFATPSQPSAATLSAHKPPNGRVLEGTDADNDPDLAAAIAASLRDWAPPQPSAPFGLNDTAGPAPTSATDASQSANSHLPLPPSLDLAPQDVDNILTFSQTVQAQQAHNQRTGMVGAPLPASVQAMYEKASSARPRMARNLEEGHRRHNVLVSMHDKLTEAVHLYDRLLDAQMTRPAQAYAPHGYAQATYPAASHQGYGYGYQPSIPLHESAYAAQQAGPSSLYLQTPQSHAGPLSDYSGTPAPWLPQQQQQLQPQPQTQPPQYEQPPYQPTQQPYAPHAAQPQYARDQPPPQHSAQQQQQQQQQQQQQQQQQQQQKQQQKQQQKQQQQQHLNPQYQQYASPNPVSNHANAVYADPNQALSPTSTVANTAQYAAYDYSGATIDHASHTQANSVAHTTAPAYAQTNGAASMSSAEPLASQPPDTLSVRTQGIMGGAPSNVSTVVPADKSQVINDGKGNESISTSHLPEDASISSRNGWSAVPTPALTEGALERTATGTDVQHQRQQQSYHQQQAPVKADTSYLPLFPVAPHPDNGFGPDRNAAEATSPMASPYTNAPSSAGMWQNPAGTGVTSASANANANANANADAAATESPLIEF</sequence>
<organism>
    <name type="scientific">Mycosarcoma maydis</name>
    <name type="common">Corn smut fungus</name>
    <name type="synonym">Ustilago maydis</name>
    <dbReference type="NCBI Taxonomy" id="5270"/>
    <lineage>
        <taxon>Eukaryota</taxon>
        <taxon>Fungi</taxon>
        <taxon>Dikarya</taxon>
        <taxon>Basidiomycota</taxon>
        <taxon>Ustilaginomycotina</taxon>
        <taxon>Ustilaginomycetes</taxon>
        <taxon>Ustilaginales</taxon>
        <taxon>Ustilaginaceae</taxon>
        <taxon>Mycosarcoma</taxon>
    </lineage>
</organism>
<accession>Q4P7Q1</accession>
<accession>A0A0D1DXE1</accession>
<gene>
    <name type="primary">VPS27</name>
    <name type="ORF">UMAG_03862</name>
</gene>
<feature type="chain" id="PRO_0000292524" description="Vacuolar protein sorting-associated protein 27">
    <location>
        <begin position="1"/>
        <end position="916"/>
    </location>
</feature>
<feature type="domain" description="VHS" evidence="3">
    <location>
        <begin position="22"/>
        <end position="153"/>
    </location>
</feature>
<feature type="domain" description="UIM 1" evidence="5">
    <location>
        <begin position="292"/>
        <end position="311"/>
    </location>
</feature>
<feature type="domain" description="UIM 2" evidence="5">
    <location>
        <begin position="349"/>
        <end position="368"/>
    </location>
</feature>
<feature type="zinc finger region" description="FYVE-type" evidence="2">
    <location>
        <begin position="176"/>
        <end position="236"/>
    </location>
</feature>
<feature type="region of interest" description="Disordered" evidence="4">
    <location>
        <begin position="238"/>
        <end position="293"/>
    </location>
</feature>
<feature type="region of interest" description="Disordered" evidence="4">
    <location>
        <begin position="307"/>
        <end position="350"/>
    </location>
</feature>
<feature type="region of interest" description="Disordered" evidence="4">
    <location>
        <begin position="365"/>
        <end position="407"/>
    </location>
</feature>
<feature type="region of interest" description="Disordered" evidence="4">
    <location>
        <begin position="543"/>
        <end position="624"/>
    </location>
</feature>
<feature type="region of interest" description="Disordered" evidence="4">
    <location>
        <begin position="641"/>
        <end position="669"/>
    </location>
</feature>
<feature type="region of interest" description="Disordered" evidence="4">
    <location>
        <begin position="723"/>
        <end position="798"/>
    </location>
</feature>
<feature type="region of interest" description="Disordered" evidence="4">
    <location>
        <begin position="850"/>
        <end position="892"/>
    </location>
</feature>
<feature type="compositionally biased region" description="Low complexity" evidence="4">
    <location>
        <begin position="247"/>
        <end position="273"/>
    </location>
</feature>
<feature type="compositionally biased region" description="Basic residues" evidence="4">
    <location>
        <begin position="274"/>
        <end position="289"/>
    </location>
</feature>
<feature type="compositionally biased region" description="Polar residues" evidence="4">
    <location>
        <begin position="311"/>
        <end position="331"/>
    </location>
</feature>
<feature type="compositionally biased region" description="Polar residues" evidence="4">
    <location>
        <begin position="385"/>
        <end position="396"/>
    </location>
</feature>
<feature type="compositionally biased region" description="Low complexity" evidence="4">
    <location>
        <begin position="561"/>
        <end position="576"/>
    </location>
</feature>
<feature type="compositionally biased region" description="Pro residues" evidence="4">
    <location>
        <begin position="577"/>
        <end position="589"/>
    </location>
</feature>
<feature type="compositionally biased region" description="Low complexity" evidence="4">
    <location>
        <begin position="590"/>
        <end position="605"/>
    </location>
</feature>
<feature type="compositionally biased region" description="Polar residues" evidence="4">
    <location>
        <begin position="650"/>
        <end position="668"/>
    </location>
</feature>
<feature type="compositionally biased region" description="Polar residues" evidence="4">
    <location>
        <begin position="777"/>
        <end position="795"/>
    </location>
</feature>
<feature type="compositionally biased region" description="Polar residues" evidence="4">
    <location>
        <begin position="866"/>
        <end position="890"/>
    </location>
</feature>
<feature type="binding site" evidence="2">
    <location>
        <position position="182"/>
    </location>
    <ligand>
        <name>Zn(2+)</name>
        <dbReference type="ChEBI" id="CHEBI:29105"/>
        <label>1</label>
    </ligand>
</feature>
<feature type="binding site" evidence="2">
    <location>
        <position position="185"/>
    </location>
    <ligand>
        <name>Zn(2+)</name>
        <dbReference type="ChEBI" id="CHEBI:29105"/>
        <label>1</label>
    </ligand>
</feature>
<feature type="binding site" evidence="2">
    <location>
        <position position="198"/>
    </location>
    <ligand>
        <name>Zn(2+)</name>
        <dbReference type="ChEBI" id="CHEBI:29105"/>
        <label>2</label>
    </ligand>
</feature>
<feature type="binding site" evidence="2">
    <location>
        <position position="201"/>
    </location>
    <ligand>
        <name>Zn(2+)</name>
        <dbReference type="ChEBI" id="CHEBI:29105"/>
        <label>2</label>
    </ligand>
</feature>
<feature type="binding site" evidence="2">
    <location>
        <position position="206"/>
    </location>
    <ligand>
        <name>Zn(2+)</name>
        <dbReference type="ChEBI" id="CHEBI:29105"/>
        <label>1</label>
    </ligand>
</feature>
<feature type="binding site" evidence="2">
    <location>
        <position position="209"/>
    </location>
    <ligand>
        <name>Zn(2+)</name>
        <dbReference type="ChEBI" id="CHEBI:29105"/>
        <label>1</label>
    </ligand>
</feature>
<feature type="binding site" evidence="2">
    <location>
        <position position="228"/>
    </location>
    <ligand>
        <name>Zn(2+)</name>
        <dbReference type="ChEBI" id="CHEBI:29105"/>
        <label>2</label>
    </ligand>
</feature>
<feature type="binding site" evidence="2">
    <location>
        <position position="231"/>
    </location>
    <ligand>
        <name>Zn(2+)</name>
        <dbReference type="ChEBI" id="CHEBI:29105"/>
        <label>2</label>
    </ligand>
</feature>